<comment type="function">
    <text evidence="8">Involved in the biosynthesis of branched-chain amino acids (BCAA). Catalyzes the second common step in the parallel biosynthesis of isoleucine and valine. Converts alpha-aceto-alpha-hydroxybutyrate (AHB) to alpha,beta-dihydroxy-beta-methylvalerate (DHMV) and alpha-acetolactate (AL) to alpha,beta-dihydroxy-isovalerate (DHV) in isoleucine and valine biosynthesis, respectively.</text>
</comment>
<comment type="catalytic activity">
    <reaction evidence="8">
        <text>(2R)-2,3-dihydroxy-3-methylbutanoate + NADP(+) = (2S)-2-acetolactate + NADPH + H(+)</text>
        <dbReference type="Rhea" id="RHEA:22068"/>
        <dbReference type="ChEBI" id="CHEBI:15378"/>
        <dbReference type="ChEBI" id="CHEBI:49072"/>
        <dbReference type="ChEBI" id="CHEBI:57783"/>
        <dbReference type="ChEBI" id="CHEBI:58349"/>
        <dbReference type="ChEBI" id="CHEBI:58476"/>
        <dbReference type="EC" id="1.1.1.86"/>
    </reaction>
    <physiologicalReaction direction="right-to-left" evidence="8">
        <dbReference type="Rhea" id="RHEA:22070"/>
    </physiologicalReaction>
</comment>
<comment type="catalytic activity">
    <reaction>
        <text>(2R,3R)-2,3-dihydroxy-3-methylpentanoate + NADP(+) = (S)-2-ethyl-2-hydroxy-3-oxobutanoate + NADPH + H(+)</text>
        <dbReference type="Rhea" id="RHEA:13493"/>
        <dbReference type="ChEBI" id="CHEBI:15378"/>
        <dbReference type="ChEBI" id="CHEBI:49256"/>
        <dbReference type="ChEBI" id="CHEBI:49258"/>
        <dbReference type="ChEBI" id="CHEBI:57783"/>
        <dbReference type="ChEBI" id="CHEBI:58349"/>
        <dbReference type="EC" id="1.1.1.86"/>
    </reaction>
    <physiologicalReaction direction="right-to-left" evidence="7">
        <dbReference type="Rhea" id="RHEA:13495"/>
    </physiologicalReaction>
</comment>
<comment type="cofactor">
    <cofactor evidence="1">
        <name>Mg(2+)</name>
        <dbReference type="ChEBI" id="CHEBI:18420"/>
    </cofactor>
    <text evidence="1">Binds 2 magnesium ions per subunit.</text>
</comment>
<comment type="pathway">
    <text evidence="8">Amino-acid biosynthesis; L-isoleucine biosynthesis; L-isoleucine from 2-oxobutanoate: step 2/4.</text>
</comment>
<comment type="pathway">
    <text evidence="8">Amino-acid biosynthesis; L-valine biosynthesis; L-valine from pyruvate: step 2/4.</text>
</comment>
<comment type="subcellular location">
    <subcellularLocation>
        <location>Mitochondrion</location>
    </subcellularLocation>
</comment>
<comment type="miscellaneous">
    <text evidence="5">Present with 883000 molecules/cell in log phase SD medium.</text>
</comment>
<comment type="similarity">
    <text evidence="7">Belongs to the ketol-acid reductoisomerase family.</text>
</comment>
<reference key="1">
    <citation type="journal article" date="1986" name="Nucleic Acids Res.">
        <title>The ILV5 gene of Saccharomyces cerevisiae is highly expressed.</title>
        <authorList>
            <person name="Petersen J.G.L."/>
            <person name="Holmberg S."/>
        </authorList>
    </citation>
    <scope>NUCLEOTIDE SEQUENCE [GENOMIC DNA]</scope>
    <scope>FUNCTION</scope>
    <scope>CATALYTIC ACTIVITY</scope>
    <scope>PATHWAY</scope>
</reference>
<reference key="2">
    <citation type="journal article" date="1997" name="Nature">
        <title>The nucleotide sequence of Saccharomyces cerevisiae chromosome XII.</title>
        <authorList>
            <person name="Johnston M."/>
            <person name="Hillier L.W."/>
            <person name="Riles L."/>
            <person name="Albermann K."/>
            <person name="Andre B."/>
            <person name="Ansorge W."/>
            <person name="Benes V."/>
            <person name="Brueckner M."/>
            <person name="Delius H."/>
            <person name="Dubois E."/>
            <person name="Duesterhoeft A."/>
            <person name="Entian K.-D."/>
            <person name="Floeth M."/>
            <person name="Goffeau A."/>
            <person name="Hebling U."/>
            <person name="Heumann K."/>
            <person name="Heuss-Neitzel D."/>
            <person name="Hilbert H."/>
            <person name="Hilger F."/>
            <person name="Kleine K."/>
            <person name="Koetter P."/>
            <person name="Louis E.J."/>
            <person name="Messenguy F."/>
            <person name="Mewes H.-W."/>
            <person name="Miosga T."/>
            <person name="Moestl D."/>
            <person name="Mueller-Auer S."/>
            <person name="Nentwich U."/>
            <person name="Obermaier B."/>
            <person name="Piravandi E."/>
            <person name="Pohl T.M."/>
            <person name="Portetelle D."/>
            <person name="Purnelle B."/>
            <person name="Rechmann S."/>
            <person name="Rieger M."/>
            <person name="Rinke M."/>
            <person name="Rose M."/>
            <person name="Scharfe M."/>
            <person name="Scherens B."/>
            <person name="Scholler P."/>
            <person name="Schwager C."/>
            <person name="Schwarz S."/>
            <person name="Underwood A.P."/>
            <person name="Urrestarazu L.A."/>
            <person name="Vandenbol M."/>
            <person name="Verhasselt P."/>
            <person name="Vierendeels F."/>
            <person name="Voet M."/>
            <person name="Volckaert G."/>
            <person name="Voss H."/>
            <person name="Wambutt R."/>
            <person name="Wedler E."/>
            <person name="Wedler H."/>
            <person name="Zimmermann F.K."/>
            <person name="Zollner A."/>
            <person name="Hani J."/>
            <person name="Hoheisel J.D."/>
        </authorList>
    </citation>
    <scope>NUCLEOTIDE SEQUENCE [LARGE SCALE GENOMIC DNA]</scope>
    <source>
        <strain>ATCC 204508 / S288c</strain>
    </source>
</reference>
<reference key="3">
    <citation type="journal article" date="2014" name="G3 (Bethesda)">
        <title>The reference genome sequence of Saccharomyces cerevisiae: Then and now.</title>
        <authorList>
            <person name="Engel S.R."/>
            <person name="Dietrich F.S."/>
            <person name="Fisk D.G."/>
            <person name="Binkley G."/>
            <person name="Balakrishnan R."/>
            <person name="Costanzo M.C."/>
            <person name="Dwight S.S."/>
            <person name="Hitz B.C."/>
            <person name="Karra K."/>
            <person name="Nash R.S."/>
            <person name="Weng S."/>
            <person name="Wong E.D."/>
            <person name="Lloyd P."/>
            <person name="Skrzypek M.S."/>
            <person name="Miyasato S.R."/>
            <person name="Simison M."/>
            <person name="Cherry J.M."/>
        </authorList>
    </citation>
    <scope>GENOME REANNOTATION</scope>
    <source>
        <strain>ATCC 204508 / S288c</strain>
    </source>
</reference>
<reference key="4">
    <citation type="journal article" date="1994" name="Electrophoresis">
        <title>Protein identifications for a Saccharomyces cerevisiae protein database.</title>
        <authorList>
            <person name="Garrels J.I."/>
            <person name="Futcher B."/>
            <person name="Kobayashi R."/>
            <person name="Latter G.I."/>
            <person name="Schwender B."/>
            <person name="Volpe T."/>
            <person name="Warner J.R."/>
            <person name="McLaughlin C.S."/>
        </authorList>
    </citation>
    <scope>PROTEIN SEQUENCE OF 166-174</scope>
    <source>
        <strain>ATCC 204508 / S288c</strain>
    </source>
</reference>
<reference key="5">
    <citation type="journal article" date="1996" name="Proc. Natl. Acad. Sci. U.S.A.">
        <title>Linking genome and proteome by mass spectrometry: large-scale identification of yeast proteins from two dimensional gels.</title>
        <authorList>
            <person name="Shevchenko A."/>
            <person name="Jensen O.N."/>
            <person name="Podtelejnikov A.V."/>
            <person name="Sagliocco F."/>
            <person name="Wilm M."/>
            <person name="Vorm O."/>
            <person name="Mortensen P."/>
            <person name="Shevchenko A."/>
            <person name="Boucherie H."/>
            <person name="Mann M."/>
        </authorList>
    </citation>
    <scope>IDENTIFICATION OF PROBABLE N-TERMINUS</scope>
</reference>
<reference key="6">
    <citation type="journal article" date="2003" name="Nature">
        <title>Global analysis of protein expression in yeast.</title>
        <authorList>
            <person name="Ghaemmaghami S."/>
            <person name="Huh W.-K."/>
            <person name="Bower K."/>
            <person name="Howson R.W."/>
            <person name="Belle A."/>
            <person name="Dephoure N."/>
            <person name="O'Shea E.K."/>
            <person name="Weissman J.S."/>
        </authorList>
    </citation>
    <scope>LEVEL OF PROTEIN EXPRESSION [LARGE SCALE ANALYSIS]</scope>
</reference>
<reference key="7">
    <citation type="journal article" date="2008" name="Mol. Cell. Proteomics">
        <title>A multidimensional chromatography technology for in-depth phosphoproteome analysis.</title>
        <authorList>
            <person name="Albuquerque C.P."/>
            <person name="Smolka M.B."/>
            <person name="Payne S.H."/>
            <person name="Bafna V."/>
            <person name="Eng J."/>
            <person name="Zhou H."/>
        </authorList>
    </citation>
    <scope>IDENTIFICATION BY MASS SPECTROMETRY [LARGE SCALE ANALYSIS]</scope>
</reference>
<reference key="8">
    <citation type="journal article" date="2009" name="Science">
        <title>Global analysis of Cdk1 substrate phosphorylation sites provides insights into evolution.</title>
        <authorList>
            <person name="Holt L.J."/>
            <person name="Tuch B.B."/>
            <person name="Villen J."/>
            <person name="Johnson A.D."/>
            <person name="Gygi S.P."/>
            <person name="Morgan D.O."/>
        </authorList>
    </citation>
    <scope>PHOSPHORYLATION [LARGE SCALE ANALYSIS] AT SER-355</scope>
    <scope>IDENTIFICATION BY MASS SPECTROMETRY [LARGE SCALE ANALYSIS]</scope>
</reference>
<evidence type="ECO:0000250" key="1"/>
<evidence type="ECO:0000255" key="2"/>
<evidence type="ECO:0000255" key="3">
    <source>
        <dbReference type="PROSITE-ProRule" id="PRU01197"/>
    </source>
</evidence>
<evidence type="ECO:0000255" key="4">
    <source>
        <dbReference type="PROSITE-ProRule" id="PRU01198"/>
    </source>
</evidence>
<evidence type="ECO:0000269" key="5">
    <source>
    </source>
</evidence>
<evidence type="ECO:0000303" key="6">
    <source>
    </source>
</evidence>
<evidence type="ECO:0000305" key="7"/>
<evidence type="ECO:0000305" key="8">
    <source>
    </source>
</evidence>
<evidence type="ECO:0007744" key="9">
    <source>
    </source>
</evidence>
<organism>
    <name type="scientific">Saccharomyces cerevisiae (strain ATCC 204508 / S288c)</name>
    <name type="common">Baker's yeast</name>
    <dbReference type="NCBI Taxonomy" id="559292"/>
    <lineage>
        <taxon>Eukaryota</taxon>
        <taxon>Fungi</taxon>
        <taxon>Dikarya</taxon>
        <taxon>Ascomycota</taxon>
        <taxon>Saccharomycotina</taxon>
        <taxon>Saccharomycetes</taxon>
        <taxon>Saccharomycetales</taxon>
        <taxon>Saccharomycetaceae</taxon>
        <taxon>Saccharomyces</taxon>
    </lineage>
</organism>
<proteinExistence type="evidence at protein level"/>
<sequence length="395" mass="44368">MLRTQAARLICNSRVITAKRTFALATRAAAYSRPAARFVKPMITTRGLKQINFGGTVETVYERADWPREKLLDYFKNDTFALIGYGSQGYGQGLNLRDNGLNVIIGVRKDGASWKAAIEDGWVPGKNLFTVEDAIKRGSYVMNLLSDAAQSETWPAIKPLLTKGKTLYFSHGFSPVFKDLTHVEPPKDLDVILVAPKGSGRTVRSLFKEGRGINSSYAVWNDVTGKAHEKAQALAVAIGSGYVYQTTFEREVNSDLYGERGCLMGGIHGMFLAQYDVLRENGHSPSEAFNETVEEATQSLYPLIGKYGMDYMYDACSTTARRGALDWYPIFKNALKPVFQDLYESTKNGTETKRSLEFNSQPDYREKLEKELDTIRNMEIWKVGKEVRKLRPENQ</sequence>
<protein>
    <recommendedName>
        <fullName evidence="7">Ketol-acid reductoisomerase, mitochondrial</fullName>
        <ecNumber evidence="8">1.1.1.86</ecNumber>
    </recommendedName>
    <alternativeName>
        <fullName evidence="6">Acetohydroxy-acid reductoisomerase</fullName>
    </alternativeName>
    <alternativeName>
        <fullName>Alpha-keto-beta-hydroxylacyl reductoisomerase</fullName>
    </alternativeName>
    <alternativeName>
        <fullName evidence="6">Isoleucine-plus-valine requiring protein 5</fullName>
    </alternativeName>
</protein>
<feature type="transit peptide" description="Mitochondrion" evidence="2">
    <location>
        <begin position="1"/>
        <end position="47"/>
    </location>
</feature>
<feature type="chain" id="PRO_0000015634" description="Ketol-acid reductoisomerase, mitochondrial">
    <location>
        <begin position="48"/>
        <end position="395"/>
    </location>
</feature>
<feature type="domain" description="KARI N-terminal Rossmann" evidence="3">
    <location>
        <begin position="57"/>
        <end position="246"/>
    </location>
</feature>
<feature type="domain" description="KARI C-terminal knotted" evidence="4">
    <location>
        <begin position="247"/>
        <end position="394"/>
    </location>
</feature>
<feature type="region of interest" description="Hydrophilic">
    <location>
        <begin position="363"/>
        <end position="395"/>
    </location>
</feature>
<feature type="active site" evidence="2">
    <location>
        <position position="171"/>
    </location>
</feature>
<feature type="binding site" evidence="2">
    <location>
        <begin position="84"/>
        <end position="93"/>
    </location>
    <ligand>
        <name>NADP(+)</name>
        <dbReference type="ChEBI" id="CHEBI:58349"/>
    </ligand>
</feature>
<feature type="binding site" evidence="1">
    <location>
        <begin position="108"/>
        <end position="113"/>
    </location>
    <ligand>
        <name>NADP(+)</name>
        <dbReference type="ChEBI" id="CHEBI:58349"/>
    </ligand>
</feature>
<feature type="binding site" evidence="1">
    <location>
        <begin position="146"/>
        <end position="150"/>
    </location>
    <ligand>
        <name>NADP(+)</name>
        <dbReference type="ChEBI" id="CHEBI:58349"/>
    </ligand>
</feature>
<feature type="binding site" evidence="4">
    <location>
        <position position="255"/>
    </location>
    <ligand>
        <name>Mg(2+)</name>
        <dbReference type="ChEBI" id="CHEBI:18420"/>
        <label>1</label>
    </ligand>
</feature>
<feature type="binding site" evidence="4">
    <location>
        <position position="255"/>
    </location>
    <ligand>
        <name>Mg(2+)</name>
        <dbReference type="ChEBI" id="CHEBI:18420"/>
        <label>2</label>
    </ligand>
</feature>
<feature type="binding site" evidence="4">
    <location>
        <position position="259"/>
    </location>
    <ligand>
        <name>Mg(2+)</name>
        <dbReference type="ChEBI" id="CHEBI:18420"/>
        <label>1</label>
    </ligand>
</feature>
<feature type="binding site" evidence="4">
    <location>
        <position position="291"/>
    </location>
    <ligand>
        <name>Mg(2+)</name>
        <dbReference type="ChEBI" id="CHEBI:18420"/>
        <label>2</label>
    </ligand>
</feature>
<feature type="binding site" evidence="4">
    <location>
        <position position="295"/>
    </location>
    <ligand>
        <name>Mg(2+)</name>
        <dbReference type="ChEBI" id="CHEBI:18420"/>
        <label>2</label>
    </ligand>
</feature>
<feature type="binding site" evidence="4">
    <location>
        <position position="317"/>
    </location>
    <ligand>
        <name>substrate</name>
    </ligand>
</feature>
<feature type="modified residue" description="Phosphoserine" evidence="9">
    <location>
        <position position="355"/>
    </location>
</feature>
<name>ILV5_YEAST</name>
<gene>
    <name evidence="6" type="primary">ILV5</name>
    <name type="ordered locus">YLR355C</name>
    <name type="ORF">L9638.7</name>
</gene>
<dbReference type="EC" id="1.1.1.86" evidence="8"/>
<dbReference type="EMBL" id="X04969">
    <property type="protein sequence ID" value="CAA28643.1"/>
    <property type="molecule type" value="Genomic_DNA"/>
</dbReference>
<dbReference type="EMBL" id="U19102">
    <property type="protein sequence ID" value="AAB67753.1"/>
    <property type="molecule type" value="Genomic_DNA"/>
</dbReference>
<dbReference type="EMBL" id="BK006945">
    <property type="protein sequence ID" value="DAA09659.1"/>
    <property type="molecule type" value="Genomic_DNA"/>
</dbReference>
<dbReference type="PIR" id="A24709">
    <property type="entry name" value="A24709"/>
</dbReference>
<dbReference type="RefSeq" id="NP_013459.1">
    <property type="nucleotide sequence ID" value="NM_001182244.1"/>
</dbReference>
<dbReference type="SMR" id="P06168"/>
<dbReference type="BioGRID" id="31617">
    <property type="interactions" value="196"/>
</dbReference>
<dbReference type="DIP" id="DIP-6463N"/>
<dbReference type="FunCoup" id="P06168">
    <property type="interactions" value="958"/>
</dbReference>
<dbReference type="IntAct" id="P06168">
    <property type="interactions" value="68"/>
</dbReference>
<dbReference type="MINT" id="P06168"/>
<dbReference type="STRING" id="4932.YLR355C"/>
<dbReference type="MoonProt" id="P06168"/>
<dbReference type="CarbonylDB" id="P06168"/>
<dbReference type="iPTMnet" id="P06168"/>
<dbReference type="PaxDb" id="4932-YLR355C"/>
<dbReference type="PeptideAtlas" id="P06168"/>
<dbReference type="TopDownProteomics" id="P06168"/>
<dbReference type="EnsemblFungi" id="YLR355C_mRNA">
    <property type="protein sequence ID" value="YLR355C"/>
    <property type="gene ID" value="YLR355C"/>
</dbReference>
<dbReference type="GeneID" id="851069"/>
<dbReference type="KEGG" id="sce:YLR355C"/>
<dbReference type="AGR" id="SGD:S000004347"/>
<dbReference type="SGD" id="S000004347">
    <property type="gene designation" value="ILV5"/>
</dbReference>
<dbReference type="VEuPathDB" id="FungiDB:YLR355C"/>
<dbReference type="eggNOG" id="ENOG502QQBF">
    <property type="taxonomic scope" value="Eukaryota"/>
</dbReference>
<dbReference type="HOGENOM" id="CLU_033821_1_2_1"/>
<dbReference type="InParanoid" id="P06168"/>
<dbReference type="OMA" id="RAMFSWL"/>
<dbReference type="OrthoDB" id="10255643at2759"/>
<dbReference type="BioCyc" id="YEAST:YLR355C-MONOMER"/>
<dbReference type="UniPathway" id="UPA00047">
    <property type="reaction ID" value="UER00056"/>
</dbReference>
<dbReference type="UniPathway" id="UPA00049">
    <property type="reaction ID" value="UER00060"/>
</dbReference>
<dbReference type="BioGRID-ORCS" id="851069">
    <property type="hits" value="3 hits in 10 CRISPR screens"/>
</dbReference>
<dbReference type="PRO" id="PR:P06168"/>
<dbReference type="Proteomes" id="UP000002311">
    <property type="component" value="Chromosome XII"/>
</dbReference>
<dbReference type="RNAct" id="P06168">
    <property type="molecule type" value="protein"/>
</dbReference>
<dbReference type="GO" id="GO:0042645">
    <property type="term" value="C:mitochondrial nucleoid"/>
    <property type="evidence" value="ECO:0000314"/>
    <property type="project" value="SGD"/>
</dbReference>
<dbReference type="GO" id="GO:0005739">
    <property type="term" value="C:mitochondrion"/>
    <property type="evidence" value="ECO:0000314"/>
    <property type="project" value="SGD"/>
</dbReference>
<dbReference type="GO" id="GO:0003690">
    <property type="term" value="F:double-stranded DNA binding"/>
    <property type="evidence" value="ECO:0000314"/>
    <property type="project" value="SGD"/>
</dbReference>
<dbReference type="GO" id="GO:0004455">
    <property type="term" value="F:ketol-acid reductoisomerase activity"/>
    <property type="evidence" value="ECO:0000315"/>
    <property type="project" value="SGD"/>
</dbReference>
<dbReference type="GO" id="GO:0046872">
    <property type="term" value="F:metal ion binding"/>
    <property type="evidence" value="ECO:0007669"/>
    <property type="project" value="UniProtKB-KW"/>
</dbReference>
<dbReference type="GO" id="GO:0009082">
    <property type="term" value="P:branched-chain amino acid biosynthetic process"/>
    <property type="evidence" value="ECO:0000315"/>
    <property type="project" value="SGD"/>
</dbReference>
<dbReference type="GO" id="GO:0009097">
    <property type="term" value="P:isoleucine biosynthetic process"/>
    <property type="evidence" value="ECO:0000318"/>
    <property type="project" value="GO_Central"/>
</dbReference>
<dbReference type="GO" id="GO:0009099">
    <property type="term" value="P:L-valine biosynthetic process"/>
    <property type="evidence" value="ECO:0000318"/>
    <property type="project" value="GO_Central"/>
</dbReference>
<dbReference type="GO" id="GO:0000002">
    <property type="term" value="P:mitochondrial genome maintenance"/>
    <property type="evidence" value="ECO:0000315"/>
    <property type="project" value="SGD"/>
</dbReference>
<dbReference type="FunFam" id="1.10.1040.10:FF:000003">
    <property type="entry name" value="Ketol-acid reductoisomerase, mitochondrial"/>
    <property type="match status" value="1"/>
</dbReference>
<dbReference type="FunFam" id="1.10.1040.10:FF:000005">
    <property type="entry name" value="Ketol-acid reductoisomerase, mitochondrial"/>
    <property type="match status" value="1"/>
</dbReference>
<dbReference type="FunFam" id="1.10.1040.10:FF:000013">
    <property type="entry name" value="Ketol-acid reductoisomerase, mitochondrial"/>
    <property type="match status" value="1"/>
</dbReference>
<dbReference type="FunFam" id="3.40.50.720:FF:000167">
    <property type="entry name" value="Ketol-acid reductoisomerase, mitochondrial"/>
    <property type="match status" value="1"/>
</dbReference>
<dbReference type="Gene3D" id="1.10.1040.10">
    <property type="entry name" value="N-(1-d-carboxylethyl)-l-norvaline Dehydrogenase, domain 2"/>
    <property type="match status" value="3"/>
</dbReference>
<dbReference type="Gene3D" id="3.40.50.720">
    <property type="entry name" value="NAD(P)-binding Rossmann-like Domain"/>
    <property type="match status" value="1"/>
</dbReference>
<dbReference type="InterPro" id="IPR008927">
    <property type="entry name" value="6-PGluconate_DH-like_C_sf"/>
</dbReference>
<dbReference type="InterPro" id="IPR013328">
    <property type="entry name" value="6PGD_dom2"/>
</dbReference>
<dbReference type="InterPro" id="IPR013023">
    <property type="entry name" value="KARI"/>
</dbReference>
<dbReference type="InterPro" id="IPR000506">
    <property type="entry name" value="KARI_C"/>
</dbReference>
<dbReference type="InterPro" id="IPR013116">
    <property type="entry name" value="KARI_N"/>
</dbReference>
<dbReference type="InterPro" id="IPR016207">
    <property type="entry name" value="KetolA_reductoisomerase_fun"/>
</dbReference>
<dbReference type="InterPro" id="IPR036291">
    <property type="entry name" value="NAD(P)-bd_dom_sf"/>
</dbReference>
<dbReference type="NCBIfam" id="TIGR00465">
    <property type="entry name" value="ilvC"/>
    <property type="match status" value="1"/>
</dbReference>
<dbReference type="PANTHER" id="PTHR21371">
    <property type="entry name" value="KETOL-ACID REDUCTOISOMERASE, MITOCHONDRIAL"/>
    <property type="match status" value="1"/>
</dbReference>
<dbReference type="PANTHER" id="PTHR21371:SF1">
    <property type="entry name" value="KETOL-ACID REDUCTOISOMERASE, MITOCHONDRIAL"/>
    <property type="match status" value="1"/>
</dbReference>
<dbReference type="Pfam" id="PF01450">
    <property type="entry name" value="KARI_C"/>
    <property type="match status" value="1"/>
</dbReference>
<dbReference type="Pfam" id="PF07991">
    <property type="entry name" value="KARI_N"/>
    <property type="match status" value="1"/>
</dbReference>
<dbReference type="PIRSF" id="PIRSF000119">
    <property type="entry name" value="Ilv5_fungal"/>
    <property type="match status" value="1"/>
</dbReference>
<dbReference type="SUPFAM" id="SSF48179">
    <property type="entry name" value="6-phosphogluconate dehydrogenase C-terminal domain-like"/>
    <property type="match status" value="1"/>
</dbReference>
<dbReference type="SUPFAM" id="SSF51735">
    <property type="entry name" value="NAD(P)-binding Rossmann-fold domains"/>
    <property type="match status" value="1"/>
</dbReference>
<dbReference type="PROSITE" id="PS51851">
    <property type="entry name" value="KARI_C"/>
    <property type="match status" value="1"/>
</dbReference>
<dbReference type="PROSITE" id="PS51850">
    <property type="entry name" value="KARI_N"/>
    <property type="match status" value="1"/>
</dbReference>
<accession>P06168</accession>
<accession>D6VYZ3</accession>
<keyword id="KW-0028">Amino-acid biosynthesis</keyword>
<keyword id="KW-0100">Branched-chain amino acid biosynthesis</keyword>
<keyword id="KW-0903">Direct protein sequencing</keyword>
<keyword id="KW-0460">Magnesium</keyword>
<keyword id="KW-0479">Metal-binding</keyword>
<keyword id="KW-0496">Mitochondrion</keyword>
<keyword id="KW-0521">NADP</keyword>
<keyword id="KW-0560">Oxidoreductase</keyword>
<keyword id="KW-0597">Phosphoprotein</keyword>
<keyword id="KW-1185">Reference proteome</keyword>
<keyword id="KW-0809">Transit peptide</keyword>